<comment type="function">
    <text evidence="1">Could be a nuclease involved in processing of the 5'-end of pre-16S rRNA.</text>
</comment>
<comment type="subcellular location">
    <subcellularLocation>
        <location evidence="1">Cytoplasm</location>
    </subcellularLocation>
</comment>
<comment type="similarity">
    <text evidence="1">Belongs to the YqgF nuclease family.</text>
</comment>
<protein>
    <recommendedName>
        <fullName evidence="1">Putative pre-16S rRNA nuclease</fullName>
        <ecNumber evidence="1">3.1.-.-</ecNumber>
    </recommendedName>
</protein>
<feature type="chain" id="PRO_1000061491" description="Putative pre-16S rRNA nuclease">
    <location>
        <begin position="1"/>
        <end position="149"/>
    </location>
</feature>
<accession>A0K541</accession>
<reference key="1">
    <citation type="submission" date="2006-08" db="EMBL/GenBank/DDBJ databases">
        <title>Complete sequence of chromosome 1 of Burkholderia cenocepacia HI2424.</title>
        <authorList>
            <person name="Copeland A."/>
            <person name="Lucas S."/>
            <person name="Lapidus A."/>
            <person name="Barry K."/>
            <person name="Detter J.C."/>
            <person name="Glavina del Rio T."/>
            <person name="Hammon N."/>
            <person name="Israni S."/>
            <person name="Pitluck S."/>
            <person name="Chain P."/>
            <person name="Malfatti S."/>
            <person name="Shin M."/>
            <person name="Vergez L."/>
            <person name="Schmutz J."/>
            <person name="Larimer F."/>
            <person name="Land M."/>
            <person name="Hauser L."/>
            <person name="Kyrpides N."/>
            <person name="Kim E."/>
            <person name="LiPuma J.J."/>
            <person name="Gonzalez C.F."/>
            <person name="Konstantinidis K."/>
            <person name="Tiedje J.M."/>
            <person name="Richardson P."/>
        </authorList>
    </citation>
    <scope>NUCLEOTIDE SEQUENCE [LARGE SCALE GENOMIC DNA]</scope>
    <source>
        <strain>HI2424</strain>
    </source>
</reference>
<name>YQGF_BURCH</name>
<organism>
    <name type="scientific">Burkholderia cenocepacia (strain HI2424)</name>
    <dbReference type="NCBI Taxonomy" id="331272"/>
    <lineage>
        <taxon>Bacteria</taxon>
        <taxon>Pseudomonadati</taxon>
        <taxon>Pseudomonadota</taxon>
        <taxon>Betaproteobacteria</taxon>
        <taxon>Burkholderiales</taxon>
        <taxon>Burkholderiaceae</taxon>
        <taxon>Burkholderia</taxon>
        <taxon>Burkholderia cepacia complex</taxon>
    </lineage>
</organism>
<gene>
    <name type="ordered locus">Bcen2424_0865</name>
</gene>
<dbReference type="EC" id="3.1.-.-" evidence="1"/>
<dbReference type="EMBL" id="CP000458">
    <property type="protein sequence ID" value="ABK07618.1"/>
    <property type="molecule type" value="Genomic_DNA"/>
</dbReference>
<dbReference type="SMR" id="A0K541"/>
<dbReference type="KEGG" id="bch:Bcen2424_0865"/>
<dbReference type="HOGENOM" id="CLU_098240_3_0_4"/>
<dbReference type="GO" id="GO:0005829">
    <property type="term" value="C:cytosol"/>
    <property type="evidence" value="ECO:0007669"/>
    <property type="project" value="TreeGrafter"/>
</dbReference>
<dbReference type="GO" id="GO:0004518">
    <property type="term" value="F:nuclease activity"/>
    <property type="evidence" value="ECO:0007669"/>
    <property type="project" value="UniProtKB-KW"/>
</dbReference>
<dbReference type="GO" id="GO:0000967">
    <property type="term" value="P:rRNA 5'-end processing"/>
    <property type="evidence" value="ECO:0007669"/>
    <property type="project" value="UniProtKB-UniRule"/>
</dbReference>
<dbReference type="CDD" id="cd16964">
    <property type="entry name" value="YqgF"/>
    <property type="match status" value="1"/>
</dbReference>
<dbReference type="Gene3D" id="3.30.420.140">
    <property type="entry name" value="YqgF/RNase H-like domain"/>
    <property type="match status" value="1"/>
</dbReference>
<dbReference type="HAMAP" id="MF_00651">
    <property type="entry name" value="Nuclease_YqgF"/>
    <property type="match status" value="1"/>
</dbReference>
<dbReference type="InterPro" id="IPR012337">
    <property type="entry name" value="RNaseH-like_sf"/>
</dbReference>
<dbReference type="InterPro" id="IPR005227">
    <property type="entry name" value="YqgF"/>
</dbReference>
<dbReference type="InterPro" id="IPR006641">
    <property type="entry name" value="YqgF/RNaseH-like_dom"/>
</dbReference>
<dbReference type="InterPro" id="IPR037027">
    <property type="entry name" value="YqgF/RNaseH-like_dom_sf"/>
</dbReference>
<dbReference type="NCBIfam" id="TIGR00250">
    <property type="entry name" value="RNAse_H_YqgF"/>
    <property type="match status" value="1"/>
</dbReference>
<dbReference type="PANTHER" id="PTHR33317">
    <property type="entry name" value="POLYNUCLEOTIDYL TRANSFERASE, RIBONUCLEASE H-LIKE SUPERFAMILY PROTEIN"/>
    <property type="match status" value="1"/>
</dbReference>
<dbReference type="PANTHER" id="PTHR33317:SF4">
    <property type="entry name" value="POLYNUCLEOTIDYL TRANSFERASE, RIBONUCLEASE H-LIKE SUPERFAMILY PROTEIN"/>
    <property type="match status" value="1"/>
</dbReference>
<dbReference type="Pfam" id="PF03652">
    <property type="entry name" value="RuvX"/>
    <property type="match status" value="1"/>
</dbReference>
<dbReference type="SMART" id="SM00732">
    <property type="entry name" value="YqgFc"/>
    <property type="match status" value="1"/>
</dbReference>
<dbReference type="SUPFAM" id="SSF53098">
    <property type="entry name" value="Ribonuclease H-like"/>
    <property type="match status" value="1"/>
</dbReference>
<proteinExistence type="inferred from homology"/>
<keyword id="KW-0963">Cytoplasm</keyword>
<keyword id="KW-0378">Hydrolase</keyword>
<keyword id="KW-0540">Nuclease</keyword>
<keyword id="KW-0690">Ribosome biogenesis</keyword>
<evidence type="ECO:0000255" key="1">
    <source>
        <dbReference type="HAMAP-Rule" id="MF_00651"/>
    </source>
</evidence>
<sequence length="149" mass="16642">MSGASARDATLLAFDYGEKRIGVAIGNALTRSARALVVIQNLNREHRFKAVGDLLAEWRPDALVVGLPMHPDGTPHDMTQQAKRFGNQLNGRFGLPVTWVDERYSSVEAEAGLRERNVRGRARTDMLDAEAARVILQQYLDQLSDHEHH</sequence>